<dbReference type="EMBL" id="AE014184">
    <property type="protein sequence ID" value="AAO44500.1"/>
    <property type="molecule type" value="Genomic_DNA"/>
</dbReference>
<dbReference type="SMR" id="P66856"/>
<dbReference type="STRING" id="203267.TWT_403"/>
<dbReference type="KEGG" id="twh:TWT_403"/>
<dbReference type="eggNOG" id="COG0629">
    <property type="taxonomic scope" value="Bacteria"/>
</dbReference>
<dbReference type="HOGENOM" id="CLU_078758_1_0_11"/>
<dbReference type="OrthoDB" id="4427276at2"/>
<dbReference type="Proteomes" id="UP000002200">
    <property type="component" value="Chromosome"/>
</dbReference>
<dbReference type="GO" id="GO:0003697">
    <property type="term" value="F:single-stranded DNA binding"/>
    <property type="evidence" value="ECO:0007669"/>
    <property type="project" value="UniProtKB-UniRule"/>
</dbReference>
<dbReference type="GO" id="GO:0006260">
    <property type="term" value="P:DNA replication"/>
    <property type="evidence" value="ECO:0007669"/>
    <property type="project" value="InterPro"/>
</dbReference>
<dbReference type="CDD" id="cd04496">
    <property type="entry name" value="SSB_OBF"/>
    <property type="match status" value="1"/>
</dbReference>
<dbReference type="Gene3D" id="2.40.50.140">
    <property type="entry name" value="Nucleic acid-binding proteins"/>
    <property type="match status" value="1"/>
</dbReference>
<dbReference type="HAMAP" id="MF_00984">
    <property type="entry name" value="SSB"/>
    <property type="match status" value="1"/>
</dbReference>
<dbReference type="InterPro" id="IPR012340">
    <property type="entry name" value="NA-bd_OB-fold"/>
</dbReference>
<dbReference type="InterPro" id="IPR000424">
    <property type="entry name" value="Primosome_PriB/ssb"/>
</dbReference>
<dbReference type="InterPro" id="IPR011344">
    <property type="entry name" value="ssDNA-bd"/>
</dbReference>
<dbReference type="Pfam" id="PF00436">
    <property type="entry name" value="SSB"/>
    <property type="match status" value="1"/>
</dbReference>
<dbReference type="PIRSF" id="PIRSF002070">
    <property type="entry name" value="SSB"/>
    <property type="match status" value="1"/>
</dbReference>
<dbReference type="SUPFAM" id="SSF50249">
    <property type="entry name" value="Nucleic acid-binding proteins"/>
    <property type="match status" value="1"/>
</dbReference>
<dbReference type="PROSITE" id="PS50935">
    <property type="entry name" value="SSB"/>
    <property type="match status" value="1"/>
</dbReference>
<keyword id="KW-0238">DNA-binding</keyword>
<keyword id="KW-1185">Reference proteome</keyword>
<accession>P66856</accession>
<accession>Q83MW0</accession>
<accession>Q83NL7</accession>
<feature type="chain" id="PRO_0000096133" description="Single-stranded DNA-binding protein 2">
    <location>
        <begin position="1"/>
        <end position="148"/>
    </location>
</feature>
<feature type="domain" description="SSB" evidence="1">
    <location>
        <begin position="6"/>
        <end position="108"/>
    </location>
</feature>
<sequence>MRGKRMNHITVSGLVATEPRSFLTAEGVHITSFRLAAQDRHFSRNANSWVSGDTNWFTVTGFRALGSNAAESISKGDRVIVYGRLRLRTWGDNKMAVEIEAESFGHDLRWGTSVFSKRFYQLPEASDNLRTKYDVDEAETPEIHAKAA</sequence>
<organism>
    <name type="scientific">Tropheryma whipplei (strain Twist)</name>
    <name type="common">Whipple's bacillus</name>
    <dbReference type="NCBI Taxonomy" id="203267"/>
    <lineage>
        <taxon>Bacteria</taxon>
        <taxon>Bacillati</taxon>
        <taxon>Actinomycetota</taxon>
        <taxon>Actinomycetes</taxon>
        <taxon>Micrococcales</taxon>
        <taxon>Tropherymataceae</taxon>
        <taxon>Tropheryma</taxon>
    </lineage>
</organism>
<reference key="1">
    <citation type="journal article" date="2003" name="Genome Res.">
        <title>Tropheryma whipplei twist: a human pathogenic Actinobacteria with a reduced genome.</title>
        <authorList>
            <person name="Raoult D."/>
            <person name="Ogata H."/>
            <person name="Audic S."/>
            <person name="Robert C."/>
            <person name="Suhre K."/>
            <person name="Drancourt M."/>
            <person name="Claverie J.-M."/>
        </authorList>
    </citation>
    <scope>NUCLEOTIDE SEQUENCE [LARGE SCALE GENOMIC DNA]</scope>
    <source>
        <strain>Twist</strain>
    </source>
</reference>
<protein>
    <recommendedName>
        <fullName evidence="1">Single-stranded DNA-binding protein 2</fullName>
        <shortName evidence="1">SSB 2</shortName>
    </recommendedName>
</protein>
<comment type="subunit">
    <text evidence="1">Homotetramer.</text>
</comment>
<evidence type="ECO:0000255" key="1">
    <source>
        <dbReference type="HAMAP-Rule" id="MF_00984"/>
    </source>
</evidence>
<gene>
    <name type="primary">ssb2</name>
    <name type="ordered locus">TWT_403</name>
</gene>
<proteinExistence type="inferred from homology"/>
<name>SSB2_TROWT</name>